<organism>
    <name type="scientific">Staphylococcus haemolyticus (strain JCSC1435)</name>
    <dbReference type="NCBI Taxonomy" id="279808"/>
    <lineage>
        <taxon>Bacteria</taxon>
        <taxon>Bacillati</taxon>
        <taxon>Bacillota</taxon>
        <taxon>Bacilli</taxon>
        <taxon>Bacillales</taxon>
        <taxon>Staphylococcaceae</taxon>
        <taxon>Staphylococcus</taxon>
    </lineage>
</organism>
<feature type="chain" id="PRO_0000095338" description="Tyrosine recombinase XerC">
    <location>
        <begin position="1"/>
        <end position="297"/>
    </location>
</feature>
<feature type="domain" description="Core-binding (CB)" evidence="3">
    <location>
        <begin position="1"/>
        <end position="84"/>
    </location>
</feature>
<feature type="domain" description="Tyr recombinase" evidence="2">
    <location>
        <begin position="105"/>
        <end position="286"/>
    </location>
</feature>
<feature type="active site" evidence="1">
    <location>
        <position position="145"/>
    </location>
</feature>
<feature type="active site" evidence="1">
    <location>
        <position position="169"/>
    </location>
</feature>
<feature type="active site" evidence="1">
    <location>
        <position position="238"/>
    </location>
</feature>
<feature type="active site" evidence="1">
    <location>
        <position position="241"/>
    </location>
</feature>
<feature type="active site" evidence="1">
    <location>
        <position position="264"/>
    </location>
</feature>
<feature type="active site" description="O-(3'-phospho-DNA)-tyrosine intermediate" evidence="1">
    <location>
        <position position="273"/>
    </location>
</feature>
<protein>
    <recommendedName>
        <fullName evidence="1">Tyrosine recombinase XerC</fullName>
    </recommendedName>
</protein>
<reference key="1">
    <citation type="journal article" date="2005" name="J. Bacteriol.">
        <title>Whole-genome sequencing of Staphylococcus haemolyticus uncovers the extreme plasticity of its genome and the evolution of human-colonizing staphylococcal species.</title>
        <authorList>
            <person name="Takeuchi F."/>
            <person name="Watanabe S."/>
            <person name="Baba T."/>
            <person name="Yuzawa H."/>
            <person name="Ito T."/>
            <person name="Morimoto Y."/>
            <person name="Kuroda M."/>
            <person name="Cui L."/>
            <person name="Takahashi M."/>
            <person name="Ankai A."/>
            <person name="Baba S."/>
            <person name="Fukui S."/>
            <person name="Lee J.C."/>
            <person name="Hiramatsu K."/>
        </authorList>
    </citation>
    <scope>NUCLEOTIDE SEQUENCE [LARGE SCALE GENOMIC DNA]</scope>
    <source>
        <strain>JCSC1435</strain>
    </source>
</reference>
<sequence length="297" mass="34922">MEEIQVTFLNMLKVERNFSAHTLKSYHDDLVQFNHFLEQELINLRTFEYKDARNYLSYLYSQNLKRTTVSRKISTLRTFYEFWMTQDETIINPFVQLVHPKKENYLPQFFYEEEMEALFETVAKDTKKGLRDRVILELLYATGIRVSELVNIQLKDIDMSLPGVKVLGKGNKERFVPFGEFCRQSIEQYLREFKPIQHTKHSFLLVNMNGAPITERGVRYVLNDVVKRTAGVTEIHPHKLRHTFATHLLNQGADLRTVQSLLGHVNLSTTGRYTHVSNQQLRKVYLNAHPRAKKESK</sequence>
<comment type="function">
    <text evidence="1">Site-specific tyrosine recombinase, which acts by catalyzing the cutting and rejoining of the recombining DNA molecules. The XerC-XerD complex is essential to convert dimers of the bacterial chromosome into monomers to permit their segregation at cell division. It also contributes to the segregational stability of plasmids.</text>
</comment>
<comment type="subunit">
    <text evidence="1">Forms a cyclic heterotetrameric complex composed of two molecules of XerC and two molecules of XerD.</text>
</comment>
<comment type="subcellular location">
    <subcellularLocation>
        <location evidence="1">Cytoplasm</location>
    </subcellularLocation>
</comment>
<comment type="similarity">
    <text evidence="1">Belongs to the 'phage' integrase family. XerC subfamily.</text>
</comment>
<evidence type="ECO:0000255" key="1">
    <source>
        <dbReference type="HAMAP-Rule" id="MF_01808"/>
    </source>
</evidence>
<evidence type="ECO:0000255" key="2">
    <source>
        <dbReference type="PROSITE-ProRule" id="PRU01246"/>
    </source>
</evidence>
<evidence type="ECO:0000255" key="3">
    <source>
        <dbReference type="PROSITE-ProRule" id="PRU01248"/>
    </source>
</evidence>
<proteinExistence type="inferred from homology"/>
<dbReference type="EMBL" id="AP006716">
    <property type="protein sequence ID" value="BAE04971.1"/>
    <property type="molecule type" value="Genomic_DNA"/>
</dbReference>
<dbReference type="RefSeq" id="WP_011275948.1">
    <property type="nucleotide sequence ID" value="NC_007168.1"/>
</dbReference>
<dbReference type="SMR" id="Q4L5V4"/>
<dbReference type="KEGG" id="sha:SH1662"/>
<dbReference type="eggNOG" id="COG4974">
    <property type="taxonomic scope" value="Bacteria"/>
</dbReference>
<dbReference type="HOGENOM" id="CLU_027562_9_0_9"/>
<dbReference type="OrthoDB" id="9801717at2"/>
<dbReference type="Proteomes" id="UP000000543">
    <property type="component" value="Chromosome"/>
</dbReference>
<dbReference type="GO" id="GO:0005737">
    <property type="term" value="C:cytoplasm"/>
    <property type="evidence" value="ECO:0007669"/>
    <property type="project" value="UniProtKB-SubCell"/>
</dbReference>
<dbReference type="GO" id="GO:0003677">
    <property type="term" value="F:DNA binding"/>
    <property type="evidence" value="ECO:0007669"/>
    <property type="project" value="UniProtKB-KW"/>
</dbReference>
<dbReference type="GO" id="GO:0009037">
    <property type="term" value="F:tyrosine-based site-specific recombinase activity"/>
    <property type="evidence" value="ECO:0007669"/>
    <property type="project" value="UniProtKB-UniRule"/>
</dbReference>
<dbReference type="GO" id="GO:0051301">
    <property type="term" value="P:cell division"/>
    <property type="evidence" value="ECO:0007669"/>
    <property type="project" value="UniProtKB-KW"/>
</dbReference>
<dbReference type="GO" id="GO:0007059">
    <property type="term" value="P:chromosome segregation"/>
    <property type="evidence" value="ECO:0007669"/>
    <property type="project" value="UniProtKB-UniRule"/>
</dbReference>
<dbReference type="GO" id="GO:0006313">
    <property type="term" value="P:DNA transposition"/>
    <property type="evidence" value="ECO:0007669"/>
    <property type="project" value="UniProtKB-UniRule"/>
</dbReference>
<dbReference type="CDD" id="cd00798">
    <property type="entry name" value="INT_XerDC_C"/>
    <property type="match status" value="1"/>
</dbReference>
<dbReference type="Gene3D" id="1.10.150.130">
    <property type="match status" value="1"/>
</dbReference>
<dbReference type="Gene3D" id="1.10.443.10">
    <property type="entry name" value="Intergrase catalytic core"/>
    <property type="match status" value="1"/>
</dbReference>
<dbReference type="HAMAP" id="MF_01808">
    <property type="entry name" value="Recomb_XerC_XerD"/>
    <property type="match status" value="1"/>
</dbReference>
<dbReference type="InterPro" id="IPR044068">
    <property type="entry name" value="CB"/>
</dbReference>
<dbReference type="InterPro" id="IPR011010">
    <property type="entry name" value="DNA_brk_join_enz"/>
</dbReference>
<dbReference type="InterPro" id="IPR013762">
    <property type="entry name" value="Integrase-like_cat_sf"/>
</dbReference>
<dbReference type="InterPro" id="IPR002104">
    <property type="entry name" value="Integrase_catalytic"/>
</dbReference>
<dbReference type="InterPro" id="IPR010998">
    <property type="entry name" value="Integrase_recombinase_N"/>
</dbReference>
<dbReference type="InterPro" id="IPR004107">
    <property type="entry name" value="Integrase_SAM-like_N"/>
</dbReference>
<dbReference type="InterPro" id="IPR011931">
    <property type="entry name" value="Recomb_XerC"/>
</dbReference>
<dbReference type="InterPro" id="IPR023009">
    <property type="entry name" value="Tyrosine_recombinase_XerC/XerD"/>
</dbReference>
<dbReference type="InterPro" id="IPR050090">
    <property type="entry name" value="Tyrosine_recombinase_XerCD"/>
</dbReference>
<dbReference type="NCBIfam" id="NF001399">
    <property type="entry name" value="PRK00283.1"/>
    <property type="match status" value="1"/>
</dbReference>
<dbReference type="NCBIfam" id="NF040815">
    <property type="entry name" value="recomb_XerA_Arch"/>
    <property type="match status" value="1"/>
</dbReference>
<dbReference type="NCBIfam" id="TIGR02224">
    <property type="entry name" value="recomb_XerC"/>
    <property type="match status" value="1"/>
</dbReference>
<dbReference type="PANTHER" id="PTHR30349">
    <property type="entry name" value="PHAGE INTEGRASE-RELATED"/>
    <property type="match status" value="1"/>
</dbReference>
<dbReference type="PANTHER" id="PTHR30349:SF77">
    <property type="entry name" value="TYROSINE RECOMBINASE XERC"/>
    <property type="match status" value="1"/>
</dbReference>
<dbReference type="Pfam" id="PF02899">
    <property type="entry name" value="Phage_int_SAM_1"/>
    <property type="match status" value="1"/>
</dbReference>
<dbReference type="Pfam" id="PF00589">
    <property type="entry name" value="Phage_integrase"/>
    <property type="match status" value="1"/>
</dbReference>
<dbReference type="SUPFAM" id="SSF56349">
    <property type="entry name" value="DNA breaking-rejoining enzymes"/>
    <property type="match status" value="1"/>
</dbReference>
<dbReference type="SUPFAM" id="SSF47823">
    <property type="entry name" value="lambda integrase-like, N-terminal domain"/>
    <property type="match status" value="1"/>
</dbReference>
<dbReference type="PROSITE" id="PS51900">
    <property type="entry name" value="CB"/>
    <property type="match status" value="1"/>
</dbReference>
<dbReference type="PROSITE" id="PS51898">
    <property type="entry name" value="TYR_RECOMBINASE"/>
    <property type="match status" value="1"/>
</dbReference>
<name>XERC_STAHJ</name>
<gene>
    <name evidence="1" type="primary">xerC</name>
    <name type="ordered locus">SH1662</name>
</gene>
<accession>Q4L5V4</accession>
<keyword id="KW-0131">Cell cycle</keyword>
<keyword id="KW-0132">Cell division</keyword>
<keyword id="KW-0159">Chromosome partition</keyword>
<keyword id="KW-0963">Cytoplasm</keyword>
<keyword id="KW-0229">DNA integration</keyword>
<keyword id="KW-0233">DNA recombination</keyword>
<keyword id="KW-0238">DNA-binding</keyword>